<dbReference type="EC" id="2.5.1.3" evidence="1"/>
<dbReference type="EMBL" id="CP000075">
    <property type="protein sequence ID" value="AAY39371.1"/>
    <property type="molecule type" value="Genomic_DNA"/>
</dbReference>
<dbReference type="RefSeq" id="WP_003368782.1">
    <property type="nucleotide sequence ID" value="NC_007005.1"/>
</dbReference>
<dbReference type="RefSeq" id="YP_237409.1">
    <property type="nucleotide sequence ID" value="NC_007005.1"/>
</dbReference>
<dbReference type="SMR" id="Q4ZNA1"/>
<dbReference type="STRING" id="205918.Psyr_4341"/>
<dbReference type="KEGG" id="psb:Psyr_4341"/>
<dbReference type="PATRIC" id="fig|205918.7.peg.4480"/>
<dbReference type="eggNOG" id="COG0352">
    <property type="taxonomic scope" value="Bacteria"/>
</dbReference>
<dbReference type="HOGENOM" id="CLU_018272_3_1_6"/>
<dbReference type="OrthoDB" id="9789949at2"/>
<dbReference type="UniPathway" id="UPA00060">
    <property type="reaction ID" value="UER00141"/>
</dbReference>
<dbReference type="Proteomes" id="UP000000426">
    <property type="component" value="Chromosome"/>
</dbReference>
<dbReference type="GO" id="GO:0005737">
    <property type="term" value="C:cytoplasm"/>
    <property type="evidence" value="ECO:0007669"/>
    <property type="project" value="TreeGrafter"/>
</dbReference>
<dbReference type="GO" id="GO:0000287">
    <property type="term" value="F:magnesium ion binding"/>
    <property type="evidence" value="ECO:0007669"/>
    <property type="project" value="UniProtKB-UniRule"/>
</dbReference>
<dbReference type="GO" id="GO:0004789">
    <property type="term" value="F:thiamine-phosphate diphosphorylase activity"/>
    <property type="evidence" value="ECO:0007669"/>
    <property type="project" value="UniProtKB-UniRule"/>
</dbReference>
<dbReference type="GO" id="GO:0009228">
    <property type="term" value="P:thiamine biosynthetic process"/>
    <property type="evidence" value="ECO:0007669"/>
    <property type="project" value="UniProtKB-KW"/>
</dbReference>
<dbReference type="GO" id="GO:0009229">
    <property type="term" value="P:thiamine diphosphate biosynthetic process"/>
    <property type="evidence" value="ECO:0007669"/>
    <property type="project" value="UniProtKB-UniRule"/>
</dbReference>
<dbReference type="CDD" id="cd00564">
    <property type="entry name" value="TMP_TenI"/>
    <property type="match status" value="1"/>
</dbReference>
<dbReference type="Gene3D" id="3.20.20.70">
    <property type="entry name" value="Aldolase class I"/>
    <property type="match status" value="1"/>
</dbReference>
<dbReference type="HAMAP" id="MF_00097">
    <property type="entry name" value="TMP_synthase"/>
    <property type="match status" value="1"/>
</dbReference>
<dbReference type="InterPro" id="IPR013785">
    <property type="entry name" value="Aldolase_TIM"/>
</dbReference>
<dbReference type="InterPro" id="IPR036206">
    <property type="entry name" value="ThiamineP_synth_sf"/>
</dbReference>
<dbReference type="InterPro" id="IPR022998">
    <property type="entry name" value="ThiamineP_synth_TenI"/>
</dbReference>
<dbReference type="InterPro" id="IPR034291">
    <property type="entry name" value="TMP_synthase"/>
</dbReference>
<dbReference type="NCBIfam" id="TIGR00693">
    <property type="entry name" value="thiE"/>
    <property type="match status" value="1"/>
</dbReference>
<dbReference type="PANTHER" id="PTHR20857">
    <property type="entry name" value="THIAMINE-PHOSPHATE PYROPHOSPHORYLASE"/>
    <property type="match status" value="1"/>
</dbReference>
<dbReference type="PANTHER" id="PTHR20857:SF15">
    <property type="entry name" value="THIAMINE-PHOSPHATE SYNTHASE"/>
    <property type="match status" value="1"/>
</dbReference>
<dbReference type="Pfam" id="PF02581">
    <property type="entry name" value="TMP-TENI"/>
    <property type="match status" value="1"/>
</dbReference>
<dbReference type="SUPFAM" id="SSF51391">
    <property type="entry name" value="Thiamin phosphate synthase"/>
    <property type="match status" value="1"/>
</dbReference>
<feature type="chain" id="PRO_1000008166" description="Thiamine-phosphate synthase">
    <location>
        <begin position="1"/>
        <end position="205"/>
    </location>
</feature>
<feature type="binding site" evidence="1">
    <location>
        <begin position="35"/>
        <end position="39"/>
    </location>
    <ligand>
        <name>4-amino-2-methyl-5-(diphosphooxymethyl)pyrimidine</name>
        <dbReference type="ChEBI" id="CHEBI:57841"/>
    </ligand>
</feature>
<feature type="binding site" evidence="1">
    <location>
        <position position="67"/>
    </location>
    <ligand>
        <name>4-amino-2-methyl-5-(diphosphooxymethyl)pyrimidine</name>
        <dbReference type="ChEBI" id="CHEBI:57841"/>
    </ligand>
</feature>
<feature type="binding site" evidence="1">
    <location>
        <position position="68"/>
    </location>
    <ligand>
        <name>Mg(2+)</name>
        <dbReference type="ChEBI" id="CHEBI:18420"/>
    </ligand>
</feature>
<feature type="binding site" evidence="1">
    <location>
        <position position="86"/>
    </location>
    <ligand>
        <name>Mg(2+)</name>
        <dbReference type="ChEBI" id="CHEBI:18420"/>
    </ligand>
</feature>
<feature type="binding site" evidence="1">
    <location>
        <position position="105"/>
    </location>
    <ligand>
        <name>4-amino-2-methyl-5-(diphosphooxymethyl)pyrimidine</name>
        <dbReference type="ChEBI" id="CHEBI:57841"/>
    </ligand>
</feature>
<feature type="binding site" evidence="1">
    <location>
        <begin position="132"/>
        <end position="134"/>
    </location>
    <ligand>
        <name>2-[(2R,5Z)-2-carboxy-4-methylthiazol-5(2H)-ylidene]ethyl phosphate</name>
        <dbReference type="ChEBI" id="CHEBI:62899"/>
    </ligand>
</feature>
<feature type="binding site" evidence="1">
    <location>
        <position position="135"/>
    </location>
    <ligand>
        <name>4-amino-2-methyl-5-(diphosphooxymethyl)pyrimidine</name>
        <dbReference type="ChEBI" id="CHEBI:57841"/>
    </ligand>
</feature>
<feature type="binding site" evidence="1">
    <location>
        <position position="162"/>
    </location>
    <ligand>
        <name>2-[(2R,5Z)-2-carboxy-4-methylthiazol-5(2H)-ylidene]ethyl phosphate</name>
        <dbReference type="ChEBI" id="CHEBI:62899"/>
    </ligand>
</feature>
<reference key="1">
    <citation type="journal article" date="2005" name="Proc. Natl. Acad. Sci. U.S.A.">
        <title>Comparison of the complete genome sequences of Pseudomonas syringae pv. syringae B728a and pv. tomato DC3000.</title>
        <authorList>
            <person name="Feil H."/>
            <person name="Feil W.S."/>
            <person name="Chain P."/>
            <person name="Larimer F."/>
            <person name="Dibartolo G."/>
            <person name="Copeland A."/>
            <person name="Lykidis A."/>
            <person name="Trong S."/>
            <person name="Nolan M."/>
            <person name="Goltsman E."/>
            <person name="Thiel J."/>
            <person name="Malfatti S."/>
            <person name="Loper J.E."/>
            <person name="Lapidus A."/>
            <person name="Detter J.C."/>
            <person name="Land M."/>
            <person name="Richardson P.M."/>
            <person name="Kyrpides N.C."/>
            <person name="Ivanova N."/>
            <person name="Lindow S.E."/>
        </authorList>
    </citation>
    <scope>NUCLEOTIDE SEQUENCE [LARGE SCALE GENOMIC DNA]</scope>
    <source>
        <strain>B728a</strain>
    </source>
</reference>
<name>THIE_PSEU2</name>
<gene>
    <name evidence="1" type="primary">thiE</name>
    <name type="ordered locus">Psyr_4341</name>
</gene>
<comment type="function">
    <text evidence="1">Condenses 4-methyl-5-(beta-hydroxyethyl)thiazole monophosphate (THZ-P) and 2-methyl-4-amino-5-hydroxymethyl pyrimidine pyrophosphate (HMP-PP) to form thiamine monophosphate (TMP).</text>
</comment>
<comment type="catalytic activity">
    <reaction evidence="1">
        <text>2-[(2R,5Z)-2-carboxy-4-methylthiazol-5(2H)-ylidene]ethyl phosphate + 4-amino-2-methyl-5-(diphosphooxymethyl)pyrimidine + 2 H(+) = thiamine phosphate + CO2 + diphosphate</text>
        <dbReference type="Rhea" id="RHEA:47844"/>
        <dbReference type="ChEBI" id="CHEBI:15378"/>
        <dbReference type="ChEBI" id="CHEBI:16526"/>
        <dbReference type="ChEBI" id="CHEBI:33019"/>
        <dbReference type="ChEBI" id="CHEBI:37575"/>
        <dbReference type="ChEBI" id="CHEBI:57841"/>
        <dbReference type="ChEBI" id="CHEBI:62899"/>
        <dbReference type="EC" id="2.5.1.3"/>
    </reaction>
</comment>
<comment type="catalytic activity">
    <reaction evidence="1">
        <text>2-(2-carboxy-4-methylthiazol-5-yl)ethyl phosphate + 4-amino-2-methyl-5-(diphosphooxymethyl)pyrimidine + 2 H(+) = thiamine phosphate + CO2 + diphosphate</text>
        <dbReference type="Rhea" id="RHEA:47848"/>
        <dbReference type="ChEBI" id="CHEBI:15378"/>
        <dbReference type="ChEBI" id="CHEBI:16526"/>
        <dbReference type="ChEBI" id="CHEBI:33019"/>
        <dbReference type="ChEBI" id="CHEBI:37575"/>
        <dbReference type="ChEBI" id="CHEBI:57841"/>
        <dbReference type="ChEBI" id="CHEBI:62890"/>
        <dbReference type="EC" id="2.5.1.3"/>
    </reaction>
</comment>
<comment type="catalytic activity">
    <reaction evidence="1">
        <text>4-methyl-5-(2-phosphooxyethyl)-thiazole + 4-amino-2-methyl-5-(diphosphooxymethyl)pyrimidine + H(+) = thiamine phosphate + diphosphate</text>
        <dbReference type="Rhea" id="RHEA:22328"/>
        <dbReference type="ChEBI" id="CHEBI:15378"/>
        <dbReference type="ChEBI" id="CHEBI:33019"/>
        <dbReference type="ChEBI" id="CHEBI:37575"/>
        <dbReference type="ChEBI" id="CHEBI:57841"/>
        <dbReference type="ChEBI" id="CHEBI:58296"/>
        <dbReference type="EC" id="2.5.1.3"/>
    </reaction>
</comment>
<comment type="cofactor">
    <cofactor evidence="1">
        <name>Mg(2+)</name>
        <dbReference type="ChEBI" id="CHEBI:18420"/>
    </cofactor>
    <text evidence="1">Binds 1 Mg(2+) ion per subunit.</text>
</comment>
<comment type="pathway">
    <text evidence="1">Cofactor biosynthesis; thiamine diphosphate biosynthesis; thiamine phosphate from 4-amino-2-methyl-5-diphosphomethylpyrimidine and 4-methyl-5-(2-phosphoethyl)-thiazole: step 1/1.</text>
</comment>
<comment type="similarity">
    <text evidence="1">Belongs to the thiamine-phosphate synthase family.</text>
</comment>
<evidence type="ECO:0000255" key="1">
    <source>
        <dbReference type="HAMAP-Rule" id="MF_00097"/>
    </source>
</evidence>
<organism>
    <name type="scientific">Pseudomonas syringae pv. syringae (strain B728a)</name>
    <dbReference type="NCBI Taxonomy" id="205918"/>
    <lineage>
        <taxon>Bacteria</taxon>
        <taxon>Pseudomonadati</taxon>
        <taxon>Pseudomonadota</taxon>
        <taxon>Gammaproteobacteria</taxon>
        <taxon>Pseudomonadales</taxon>
        <taxon>Pseudomonadaceae</taxon>
        <taxon>Pseudomonas</taxon>
        <taxon>Pseudomonas syringae</taxon>
    </lineage>
</organism>
<accession>Q4ZNA1</accession>
<protein>
    <recommendedName>
        <fullName evidence="1">Thiamine-phosphate synthase</fullName>
        <shortName evidence="1">TP synthase</shortName>
        <shortName evidence="1">TPS</shortName>
        <ecNumber evidence="1">2.5.1.3</ecNumber>
    </recommendedName>
    <alternativeName>
        <fullName evidence="1">Thiamine-phosphate pyrophosphorylase</fullName>
        <shortName evidence="1">TMP pyrophosphorylase</shortName>
        <shortName evidence="1">TMP-PPase</shortName>
    </alternativeName>
</protein>
<keyword id="KW-0460">Magnesium</keyword>
<keyword id="KW-0479">Metal-binding</keyword>
<keyword id="KW-0784">Thiamine biosynthesis</keyword>
<keyword id="KW-0808">Transferase</keyword>
<sequence length="205" mass="22022">MKLRGLYAITDSQLLSGKFLSYVEAALDGGVTLLQYRDKNSDESRRLREATELLKLCERYKTRLIINDDAELAARLGVGVHLGQSDGSLPDARALLGHKAIVGATCHGRVELAEQAKADGATYVAFGRFFNSLTKPGAPAVPLDLIAQVRARVHLPIAVIGGITLENAPQLVEHGADLLAVVHGLFGAENTQEVTRRAKAFTALL</sequence>
<proteinExistence type="inferred from homology"/>